<reference key="1">
    <citation type="journal article" date="2017" name="Nat. Chem. Biol.">
        <title>Parallel evolution of non-homologous isofunctional enzymes in methionine biosynthesis.</title>
        <authorList>
            <person name="Bastard K."/>
            <person name="Perret A."/>
            <person name="Mariage A."/>
            <person name="Bessonnet T."/>
            <person name="Pinet-Turpault A."/>
            <person name="Petit J.L."/>
            <person name="Darii E."/>
            <person name="Bazire P."/>
            <person name="Vergne-Vaxelaire C."/>
            <person name="Brewee C."/>
            <person name="Debard A."/>
            <person name="Pellouin V."/>
            <person name="Besnard-Gonnet M."/>
            <person name="Artiguenave F."/>
            <person name="Medigue C."/>
            <person name="Vallenet D."/>
            <person name="Danchin A."/>
            <person name="Zaparucha A."/>
            <person name="Weissenbach J."/>
            <person name="Salanoubat M."/>
            <person name="de Berardinis V."/>
        </authorList>
    </citation>
    <scope>NUCLEOTIDE SEQUENCE [GENOMIC DNA]</scope>
    <scope>FUNCTION</scope>
    <scope>CATALYTIC ACTIVITY</scope>
    <scope>ACTIVITY REGULATION</scope>
    <source>
        <strain>DSM 9188</strain>
    </source>
</reference>
<evidence type="ECO:0000255" key="1">
    <source>
        <dbReference type="HAMAP-Rule" id="MF_00296"/>
    </source>
</evidence>
<evidence type="ECO:0000269" key="2">
    <source>
    </source>
</evidence>
<evidence type="ECO:0000303" key="3">
    <source>
    </source>
</evidence>
<evidence type="ECO:0000305" key="4">
    <source>
    </source>
</evidence>
<sequence length="379" mass="42147">MSQNTSVGIVTPQKIPFEMPLVLENGKTLPRFDLMIETYGELNAEKNNAVLICHALSGNHHVAGKHSAEDKYTGWWDNMVGPGKPIDTERFFVVGLNNLGGCDGSSGPLSINPETGREYGADFPMVTVKDWVKSQAALADYLGIEQWAAVVGGSLGGMQALQWAISYPERVRHALVIASAPKLSTQNIAFNDVARQAILTDPDFNEGHYRSHNTVPARGLRIARMMGHITYLAEDGLGKKFGRDLRSNGYQYGYSVEFEVESYLRYQGDKFVGRFDANTYLLMTKALDYFDPAADFGNSLTRAVQDVQAKFFVASFSTDWRFAPERSHELVKALIAAQKSVQYIEVKSAHGHDAFLMEDEAYMRAVTAYMNNVDKDCRL</sequence>
<dbReference type="EC" id="2.3.1.46" evidence="1 2"/>
<dbReference type="EMBL" id="LN871225">
    <property type="protein sequence ID" value="CTQ31228.1"/>
    <property type="molecule type" value="Genomic_DNA"/>
</dbReference>
<dbReference type="SMR" id="A0A0I9QGZ7"/>
<dbReference type="ESTHER" id="neima-metx">
    <property type="family name" value="Homoserine_transacetylase"/>
</dbReference>
<dbReference type="PATRIC" id="fig|485.41.peg.1815"/>
<dbReference type="UniPathway" id="UPA00051">
    <property type="reaction ID" value="UER00075"/>
</dbReference>
<dbReference type="GO" id="GO:0005737">
    <property type="term" value="C:cytoplasm"/>
    <property type="evidence" value="ECO:0007669"/>
    <property type="project" value="UniProtKB-SubCell"/>
</dbReference>
<dbReference type="GO" id="GO:0004414">
    <property type="term" value="F:homoserine O-acetyltransferase activity"/>
    <property type="evidence" value="ECO:0007669"/>
    <property type="project" value="TreeGrafter"/>
</dbReference>
<dbReference type="GO" id="GO:0008899">
    <property type="term" value="F:homoserine O-succinyltransferase activity"/>
    <property type="evidence" value="ECO:0007669"/>
    <property type="project" value="UniProtKB-UniRule"/>
</dbReference>
<dbReference type="GO" id="GO:0009092">
    <property type="term" value="P:homoserine metabolic process"/>
    <property type="evidence" value="ECO:0007669"/>
    <property type="project" value="TreeGrafter"/>
</dbReference>
<dbReference type="GO" id="GO:0009086">
    <property type="term" value="P:methionine biosynthetic process"/>
    <property type="evidence" value="ECO:0007669"/>
    <property type="project" value="UniProtKB-UniRule"/>
</dbReference>
<dbReference type="FunFam" id="1.10.1740.110:FF:000001">
    <property type="entry name" value="Homoserine O-acetyltransferase"/>
    <property type="match status" value="1"/>
</dbReference>
<dbReference type="Gene3D" id="1.10.1740.110">
    <property type="match status" value="1"/>
</dbReference>
<dbReference type="Gene3D" id="3.40.50.1820">
    <property type="entry name" value="alpha/beta hydrolase"/>
    <property type="match status" value="1"/>
</dbReference>
<dbReference type="HAMAP" id="MF_00296">
    <property type="entry name" value="MetX_acyltransf"/>
    <property type="match status" value="1"/>
</dbReference>
<dbReference type="InterPro" id="IPR000073">
    <property type="entry name" value="AB_hydrolase_1"/>
</dbReference>
<dbReference type="InterPro" id="IPR029058">
    <property type="entry name" value="AB_hydrolase_fold"/>
</dbReference>
<dbReference type="InterPro" id="IPR008220">
    <property type="entry name" value="HAT_MetX-like"/>
</dbReference>
<dbReference type="NCBIfam" id="TIGR01392">
    <property type="entry name" value="homoserO_Ac_trn"/>
    <property type="match status" value="1"/>
</dbReference>
<dbReference type="NCBIfam" id="NF001209">
    <property type="entry name" value="PRK00175.1"/>
    <property type="match status" value="1"/>
</dbReference>
<dbReference type="PANTHER" id="PTHR32268">
    <property type="entry name" value="HOMOSERINE O-ACETYLTRANSFERASE"/>
    <property type="match status" value="1"/>
</dbReference>
<dbReference type="PANTHER" id="PTHR32268:SF11">
    <property type="entry name" value="HOMOSERINE O-ACETYLTRANSFERASE"/>
    <property type="match status" value="1"/>
</dbReference>
<dbReference type="Pfam" id="PF00561">
    <property type="entry name" value="Abhydrolase_1"/>
    <property type="match status" value="1"/>
</dbReference>
<dbReference type="PIRSF" id="PIRSF000443">
    <property type="entry name" value="Homoser_Ac_trans"/>
    <property type="match status" value="1"/>
</dbReference>
<dbReference type="SUPFAM" id="SSF53474">
    <property type="entry name" value="alpha/beta-Hydrolases"/>
    <property type="match status" value="1"/>
</dbReference>
<keyword id="KW-0012">Acyltransferase</keyword>
<keyword id="KW-0028">Amino-acid biosynthesis</keyword>
<keyword id="KW-0963">Cytoplasm</keyword>
<keyword id="KW-0486">Methionine biosynthesis</keyword>
<keyword id="KW-0808">Transferase</keyword>
<protein>
    <recommendedName>
        <fullName evidence="1">Homoserine O-succinyltransferase</fullName>
        <shortName evidence="1 3">HST</shortName>
        <ecNumber evidence="1 2">2.3.1.46</ecNumber>
    </recommendedName>
    <alternativeName>
        <fullName evidence="1">Homoserine transsuccinylase</fullName>
        <shortName evidence="1">HTS</shortName>
    </alternativeName>
</protein>
<feature type="chain" id="PRO_0000440304" description="Homoserine O-succinyltransferase">
    <location>
        <begin position="1"/>
        <end position="379"/>
    </location>
</feature>
<feature type="domain" description="AB hydrolase-1" evidence="1">
    <location>
        <begin position="48"/>
        <end position="357"/>
    </location>
</feature>
<feature type="active site" description="Nucleophile" evidence="1">
    <location>
        <position position="154"/>
    </location>
</feature>
<feature type="active site" evidence="1">
    <location>
        <position position="319"/>
    </location>
</feature>
<feature type="active site" evidence="1">
    <location>
        <position position="352"/>
    </location>
</feature>
<feature type="binding site" evidence="1">
    <location>
        <position position="224"/>
    </location>
    <ligand>
        <name>substrate</name>
    </ligand>
</feature>
<feature type="binding site" evidence="1">
    <location>
        <position position="353"/>
    </location>
    <ligand>
        <name>substrate</name>
    </ligand>
</feature>
<feature type="site" description="Important for acyl-CoA specificity" evidence="1 4">
    <location>
        <position position="321"/>
    </location>
</feature>
<accession>A0A0I9QGZ7</accession>
<proteinExistence type="evidence at protein level"/>
<gene>
    <name evidence="1 3" type="primary">metXS</name>
</gene>
<name>METXS_NEIGO</name>
<comment type="function">
    <text evidence="1 2">Transfers a succinyl group from succinyl-CoA to L-homoserine, forming succinyl-L-homoserine.</text>
</comment>
<comment type="catalytic activity">
    <reaction evidence="1 2">
        <text>L-homoserine + succinyl-CoA = O-succinyl-L-homoserine + CoA</text>
        <dbReference type="Rhea" id="RHEA:22008"/>
        <dbReference type="ChEBI" id="CHEBI:57287"/>
        <dbReference type="ChEBI" id="CHEBI:57292"/>
        <dbReference type="ChEBI" id="CHEBI:57476"/>
        <dbReference type="ChEBI" id="CHEBI:57661"/>
        <dbReference type="EC" id="2.3.1.46"/>
    </reaction>
</comment>
<comment type="activity regulation">
    <text evidence="2">Activity increases in the presence of MetW.</text>
</comment>
<comment type="pathway">
    <text evidence="1">Amino-acid biosynthesis; L-methionine biosynthesis via de novo pathway; O-succinyl-L-homoserine from L-homoserine: step 1/1.</text>
</comment>
<comment type="subunit">
    <text evidence="1">Homodimer.</text>
</comment>
<comment type="subcellular location">
    <subcellularLocation>
        <location evidence="1">Cytoplasm</location>
    </subcellularLocation>
</comment>
<comment type="similarity">
    <text evidence="1">Belongs to the AB hydrolase superfamily. MetX family.</text>
</comment>
<organism>
    <name type="scientific">Neisseria gonorrhoeae</name>
    <dbReference type="NCBI Taxonomy" id="485"/>
    <lineage>
        <taxon>Bacteria</taxon>
        <taxon>Pseudomonadati</taxon>
        <taxon>Pseudomonadota</taxon>
        <taxon>Betaproteobacteria</taxon>
        <taxon>Neisseriales</taxon>
        <taxon>Neisseriaceae</taxon>
        <taxon>Neisseria</taxon>
    </lineage>
</organism>